<accession>Q23022</accession>
<accession>O02559</accession>
<accession>P91265</accession>
<accession>Q17408</accession>
<proteinExistence type="evidence at protein level"/>
<evidence type="ECO:0000250" key="1"/>
<evidence type="ECO:0000255" key="2"/>
<evidence type="ECO:0000269" key="3">
    <source>
    </source>
</evidence>
<evidence type="ECO:0000269" key="4">
    <source>
    </source>
</evidence>
<evidence type="ECO:0000269" key="5">
    <source>
    </source>
</evidence>
<evidence type="ECO:0000305" key="6"/>
<name>ACH5_CAEEL</name>
<protein>
    <recommendedName>
        <fullName>Acetylcholine receptor subunit alpha-type unc-38</fullName>
    </recommendedName>
    <alternativeName>
        <fullName>Uncoordinated protein 38</fullName>
    </alternativeName>
</protein>
<reference key="1">
    <citation type="journal article" date="1997" name="J. Neurosci.">
        <title>Caenorhabditis elegans levamisole resistance genes lev-1, unc-29, and unc-38 encode functional nicotinic acetylcholine receptor subunits.</title>
        <authorList>
            <person name="Fleming J.T."/>
            <person name="Squire M.D."/>
            <person name="Barnes T.M."/>
            <person name="Tornoe C."/>
            <person name="Matsuda K."/>
            <person name="Ahnn J."/>
            <person name="Fire A."/>
            <person name="Sulston J.E."/>
            <person name="Barnard E.A."/>
            <person name="Sattelle D.B."/>
            <person name="Lewis J.A."/>
        </authorList>
    </citation>
    <scope>NUCLEOTIDE SEQUENCE [GENOMIC DNA / MRNA]</scope>
    <scope>FUNCTION</scope>
    <source>
        <strain>Bristol N2</strain>
    </source>
</reference>
<reference key="2">
    <citation type="journal article" date="1998" name="Science">
        <title>Genome sequence of the nematode C. elegans: a platform for investigating biology.</title>
        <authorList>
            <consortium name="The C. elegans sequencing consortium"/>
        </authorList>
    </citation>
    <scope>NUCLEOTIDE SEQUENCE [LARGE SCALE GENOMIC DNA]</scope>
    <source>
        <strain>Bristol N2</strain>
    </source>
</reference>
<reference key="3">
    <citation type="journal article" date="2005" name="EMBO J.">
        <title>Identification and characterization of novel nicotinic receptor-associated proteins in Caenorhabditis elegans.</title>
        <authorList>
            <person name="Gottschalk A."/>
            <person name="Almedom R.B."/>
            <person name="Schedletzky T."/>
            <person name="Anderson S.D."/>
            <person name="Yates J.R. III"/>
            <person name="Schafer W.R."/>
        </authorList>
    </citation>
    <scope>FUNCTION</scope>
    <scope>INTERACTION WITH NICOTINIC ACETYLCHOLINE RECEPTOR</scope>
    <scope>SUBCELLULAR LOCATION</scope>
    <scope>DISRUPTION PHENOTYPE</scope>
</reference>
<reference key="4">
    <citation type="journal article" date="2009" name="PLoS Biol.">
        <title>A neuronal acetylcholine receptor regulates the balance of muscle excitation and inhibition in Caenorhabditis elegans.</title>
        <authorList>
            <person name="Jospin M."/>
            <person name="Qi Y.B."/>
            <person name="Stawicki T.M."/>
            <person name="Boulin T."/>
            <person name="Schuske K.R."/>
            <person name="Horvitz H.R."/>
            <person name="Bessereau J.L."/>
            <person name="Jorgensen E.M."/>
            <person name="Jin Y."/>
        </authorList>
    </citation>
    <scope>FUNCTION</scope>
    <scope>INTERACTION WITH NICOTINIC ACETYLCHOLINE RECEPTOR</scope>
</reference>
<keyword id="KW-1003">Cell membrane</keyword>
<keyword id="KW-1015">Disulfide bond</keyword>
<keyword id="KW-0325">Glycoprotein</keyword>
<keyword id="KW-0407">Ion channel</keyword>
<keyword id="KW-0406">Ion transport</keyword>
<keyword id="KW-1071">Ligand-gated ion channel</keyword>
<keyword id="KW-0472">Membrane</keyword>
<keyword id="KW-0628">Postsynaptic cell membrane</keyword>
<keyword id="KW-0675">Receptor</keyword>
<keyword id="KW-1185">Reference proteome</keyword>
<keyword id="KW-0732">Signal</keyword>
<keyword id="KW-0770">Synapse</keyword>
<keyword id="KW-0812">Transmembrane</keyword>
<keyword id="KW-1133">Transmembrane helix</keyword>
<keyword id="KW-0813">Transport</keyword>
<sequence>MRSFWLFLLLLLFCISFIKLTEGNEDAKRLYDDLMVNYNRHRRPSTSPNKPLTIKLKLRLSQIIDVHEIDQIMTCSVWLKQTWIDRKLSWDPVNYGGVNVLYVPYEMIWVPDIVLYNNADSNYNITISTKATLHYTGEVTWEPPAIFKSMCQIDVRWFPFDEQQCHLKFGSWTFSENLLSVELNEPSLRYEEEIDEKGIIDNVTVAEDGIDLSDYYPSVEWDIMSRVAKRRAKNYPSCCPQSAYIDVTYYLQLRRKPLFYTVNLVFPCVGISFLTILVFYLPSDSGEKVTLCISILVALTIFFLLLTEIIPATSITLPLIGKYLLFTMVMVTLSVVVTVISLNLHFRTPTTHLMPNWVKKVFLKWLPKLLFMRRPIDDYEEKFDDKKKPKDGKIALSVHAHRVSNVGNNIRNATIDDTIQKMYYSPPVVKAFENICFIAELLKKKDRDDKIDEDWKYVAMVLDRLFLLIFSIACFVGTVIILLRAPTLYDTRQPIDLQYRPANLSANPISF</sequence>
<feature type="signal peptide" evidence="2">
    <location>
        <begin position="1"/>
        <end position="16"/>
    </location>
</feature>
<feature type="chain" id="PRO_0000000399" description="Acetylcholine receptor subunit alpha-type unc-38">
    <location>
        <begin position="17"/>
        <end position="511"/>
    </location>
</feature>
<feature type="topological domain" description="Extracellular" evidence="2">
    <location>
        <begin position="17"/>
        <end position="261"/>
    </location>
</feature>
<feature type="transmembrane region" description="Helical" evidence="2">
    <location>
        <begin position="262"/>
        <end position="282"/>
    </location>
</feature>
<feature type="transmembrane region" description="Helical" evidence="2">
    <location>
        <begin position="291"/>
        <end position="311"/>
    </location>
</feature>
<feature type="transmembrane region" description="Helical" evidence="2">
    <location>
        <begin position="324"/>
        <end position="344"/>
    </location>
</feature>
<feature type="topological domain" description="Cytoplasmic" evidence="2">
    <location>
        <begin position="345"/>
        <end position="464"/>
    </location>
</feature>
<feature type="transmembrane region" description="Helical" evidence="2">
    <location>
        <begin position="465"/>
        <end position="485"/>
    </location>
</feature>
<feature type="glycosylation site" description="N-linked (GlcNAc...) asparagine" evidence="2">
    <location>
        <position position="124"/>
    </location>
</feature>
<feature type="glycosylation site" description="N-linked (GlcNAc...) asparagine" evidence="2">
    <location>
        <position position="202"/>
    </location>
</feature>
<feature type="disulfide bond" evidence="1">
    <location>
        <begin position="151"/>
        <end position="165"/>
    </location>
</feature>
<feature type="disulfide bond" evidence="1">
    <location>
        <begin position="238"/>
        <end position="239"/>
    </location>
</feature>
<gene>
    <name type="primary">unc-38</name>
    <name type="ORF">F21F3.5</name>
</gene>
<comment type="function">
    <text evidence="3 4 5">Alpha subunit of nicotinic acetylcholine receptor (nAChR) (PubMed:15990870, PubMed:20027209, PubMed:9221782). Probably acts in cholinergic motoneurons to regulate presynaptic neurotransmitter release, thereby ensuring normal level of excitation of cholinergic motoneurons during locomotion (PubMed:20027209). Involved in nAChR sensitivity to nicotine (PubMed:15990870, PubMed:9221782).</text>
</comment>
<comment type="subunit">
    <text evidence="3 4">Component of nicotinic acetylcholine receptor (PubMed:15990870, PubMed:20027209). In muscles, composed of 2 non-alpha subunits lev-1 and unc-29, and 3 alpha subunits unc-38, unc-63 and lev-8 (PubMed:15990870). In cholinergic motoneurons, composed of 2 non-alpha subunits acr-2 and acr-3, and 3 alpha subunits unc-38, unc-63 and acr-12 (PubMed:20027209).</text>
</comment>
<comment type="subcellular location">
    <subcellularLocation>
        <location evidence="3">Postsynaptic cell membrane</location>
        <topology evidence="2">Multi-pass membrane protein</topology>
    </subcellularLocation>
    <subcellularLocation>
        <location evidence="3">Cell membrane</location>
        <topology evidence="2">Multi-pass membrane protein</topology>
    </subcellularLocation>
    <text evidence="3">Co-localizes with unc-29 and lev-1 and partially with acr-12 and acr-8 at nerve cord synapses.</text>
</comment>
<comment type="disruption phenotype">
    <text evidence="3">RNAi-mediated knockdown causes a resistance to nicotine-mediated paralysis.</text>
</comment>
<comment type="similarity">
    <text evidence="6">Belongs to the ligand-gated ion channel (TC 1.A.9) family. Acetylcholine receptor (TC 1.A.9.1) subfamily.</text>
</comment>
<organism>
    <name type="scientific">Caenorhabditis elegans</name>
    <dbReference type="NCBI Taxonomy" id="6239"/>
    <lineage>
        <taxon>Eukaryota</taxon>
        <taxon>Metazoa</taxon>
        <taxon>Ecdysozoa</taxon>
        <taxon>Nematoda</taxon>
        <taxon>Chromadorea</taxon>
        <taxon>Rhabditida</taxon>
        <taxon>Rhabditina</taxon>
        <taxon>Rhabditomorpha</taxon>
        <taxon>Rhabditoidea</taxon>
        <taxon>Rhabditidae</taxon>
        <taxon>Peloderinae</taxon>
        <taxon>Caenorhabditis</taxon>
    </lineage>
</organism>
<dbReference type="EMBL" id="X98599">
    <property type="protein sequence ID" value="CAA67196.1"/>
    <property type="molecule type" value="Genomic_DNA"/>
</dbReference>
<dbReference type="EMBL" id="X98600">
    <property type="protein sequence ID" value="CAA67197.1"/>
    <property type="molecule type" value="mRNA"/>
</dbReference>
<dbReference type="EMBL" id="FO081197">
    <property type="protein sequence ID" value="CCD69819.1"/>
    <property type="molecule type" value="Genomic_DNA"/>
</dbReference>
<dbReference type="PIR" id="T25720">
    <property type="entry name" value="T25720"/>
</dbReference>
<dbReference type="PIR" id="T43634">
    <property type="entry name" value="T43634"/>
</dbReference>
<dbReference type="RefSeq" id="NP_491472.1">
    <property type="nucleotide sequence ID" value="NM_059071.8"/>
</dbReference>
<dbReference type="SMR" id="Q23022"/>
<dbReference type="BioGRID" id="37567">
    <property type="interactions" value="3"/>
</dbReference>
<dbReference type="FunCoup" id="Q23022">
    <property type="interactions" value="36"/>
</dbReference>
<dbReference type="IntAct" id="Q23022">
    <property type="interactions" value="4"/>
</dbReference>
<dbReference type="MINT" id="Q23022"/>
<dbReference type="STRING" id="6239.F21F3.5.1"/>
<dbReference type="DrugBank" id="DB00848">
    <property type="generic name" value="Levamisole"/>
</dbReference>
<dbReference type="TCDB" id="1.A.9.1.2">
    <property type="family name" value="the neurotransmitter receptor, cys loop, ligand-gated ion channel (lic) family"/>
</dbReference>
<dbReference type="GlyCosmos" id="Q23022">
    <property type="glycosylation" value="2 sites, No reported glycans"/>
</dbReference>
<dbReference type="iPTMnet" id="Q23022"/>
<dbReference type="PaxDb" id="6239-F21F3.5"/>
<dbReference type="EnsemblMetazoa" id="F21F3.5.1">
    <property type="protein sequence ID" value="F21F3.5.1"/>
    <property type="gene ID" value="WBGene00006774"/>
</dbReference>
<dbReference type="GeneID" id="172105"/>
<dbReference type="KEGG" id="cel:CELE_F21F3.5"/>
<dbReference type="UCSC" id="F21F3.5">
    <property type="organism name" value="c. elegans"/>
</dbReference>
<dbReference type="AGR" id="WB:WBGene00006774"/>
<dbReference type="CTD" id="172105"/>
<dbReference type="WormBase" id="F21F3.5">
    <property type="protein sequence ID" value="CE24908"/>
    <property type="gene ID" value="WBGene00006774"/>
    <property type="gene designation" value="unc-38"/>
</dbReference>
<dbReference type="eggNOG" id="KOG3645">
    <property type="taxonomic scope" value="Eukaryota"/>
</dbReference>
<dbReference type="GeneTree" id="ENSGT00940000171907"/>
<dbReference type="HOGENOM" id="CLU_018074_1_0_1"/>
<dbReference type="InParanoid" id="Q23022"/>
<dbReference type="OMA" id="YIDIMYY"/>
<dbReference type="OrthoDB" id="5975154at2759"/>
<dbReference type="PhylomeDB" id="Q23022"/>
<dbReference type="Reactome" id="R-CEL-629587">
    <property type="pathway name" value="Highly sodium permeable postsynaptic acetylcholine nicotinic receptors"/>
</dbReference>
<dbReference type="Reactome" id="R-CEL-629594">
    <property type="pathway name" value="Highly calcium permeable postsynaptic nicotinic acetylcholine receptors"/>
</dbReference>
<dbReference type="Reactome" id="R-CEL-629597">
    <property type="pathway name" value="Highly calcium permeable nicotinic acetylcholine receptors"/>
</dbReference>
<dbReference type="Reactome" id="R-CEL-6798695">
    <property type="pathway name" value="Neutrophil degranulation"/>
</dbReference>
<dbReference type="PRO" id="PR:Q23022"/>
<dbReference type="Proteomes" id="UP000001940">
    <property type="component" value="Chromosome I"/>
</dbReference>
<dbReference type="Bgee" id="WBGene00006774">
    <property type="expression patterns" value="Expressed in larva and 3 other cell types or tissues"/>
</dbReference>
<dbReference type="GO" id="GO:0005892">
    <property type="term" value="C:acetylcholine-gated channel complex"/>
    <property type="evidence" value="ECO:0000318"/>
    <property type="project" value="GO_Central"/>
</dbReference>
<dbReference type="GO" id="GO:0043005">
    <property type="term" value="C:neuron projection"/>
    <property type="evidence" value="ECO:0000314"/>
    <property type="project" value="WormBase"/>
</dbReference>
<dbReference type="GO" id="GO:0005886">
    <property type="term" value="C:plasma membrane"/>
    <property type="evidence" value="ECO:0000318"/>
    <property type="project" value="GO_Central"/>
</dbReference>
<dbReference type="GO" id="GO:0045211">
    <property type="term" value="C:postsynaptic membrane"/>
    <property type="evidence" value="ECO:0000314"/>
    <property type="project" value="WormBase"/>
</dbReference>
<dbReference type="GO" id="GO:0045202">
    <property type="term" value="C:synapse"/>
    <property type="evidence" value="ECO:0000314"/>
    <property type="project" value="WormBase"/>
</dbReference>
<dbReference type="GO" id="GO:0022848">
    <property type="term" value="F:acetylcholine-gated monoatomic cation-selective channel activity"/>
    <property type="evidence" value="ECO:0000314"/>
    <property type="project" value="WormBase"/>
</dbReference>
<dbReference type="GO" id="GO:0005231">
    <property type="term" value="F:excitatory extracellular ligand-gated monoatomic ion channel activity"/>
    <property type="evidence" value="ECO:0000314"/>
    <property type="project" value="WormBase"/>
</dbReference>
<dbReference type="GO" id="GO:0005230">
    <property type="term" value="F:extracellular ligand-gated monoatomic ion channel activity"/>
    <property type="evidence" value="ECO:0000314"/>
    <property type="project" value="WormBase"/>
</dbReference>
<dbReference type="GO" id="GO:0004888">
    <property type="term" value="F:transmembrane signaling receptor activity"/>
    <property type="evidence" value="ECO:0007669"/>
    <property type="project" value="InterPro"/>
</dbReference>
<dbReference type="GO" id="GO:0098703">
    <property type="term" value="P:calcium ion import across plasma membrane"/>
    <property type="evidence" value="ECO:0000314"/>
    <property type="project" value="WormBase"/>
</dbReference>
<dbReference type="GO" id="GO:0007268">
    <property type="term" value="P:chemical synaptic transmission"/>
    <property type="evidence" value="ECO:0000318"/>
    <property type="project" value="GO_Central"/>
</dbReference>
<dbReference type="GO" id="GO:0098662">
    <property type="term" value="P:inorganic cation transmembrane transport"/>
    <property type="evidence" value="ECO:0000314"/>
    <property type="project" value="WormBase"/>
</dbReference>
<dbReference type="GO" id="GO:0040011">
    <property type="term" value="P:locomotion"/>
    <property type="evidence" value="ECO:0000315"/>
    <property type="project" value="WormBase"/>
</dbReference>
<dbReference type="GO" id="GO:0034220">
    <property type="term" value="P:monoatomic ion transmembrane transport"/>
    <property type="evidence" value="ECO:0000318"/>
    <property type="project" value="GO_Central"/>
</dbReference>
<dbReference type="GO" id="GO:0007274">
    <property type="term" value="P:neuromuscular synaptic transmission"/>
    <property type="evidence" value="ECO:0000314"/>
    <property type="project" value="WormBase"/>
</dbReference>
<dbReference type="GO" id="GO:0090326">
    <property type="term" value="P:positive regulation of locomotion involved in locomotory behavior"/>
    <property type="evidence" value="ECO:0000315"/>
    <property type="project" value="UniProtKB"/>
</dbReference>
<dbReference type="GO" id="GO:0046662">
    <property type="term" value="P:regulation of egg-laying behavior"/>
    <property type="evidence" value="ECO:0000315"/>
    <property type="project" value="WormBase"/>
</dbReference>
<dbReference type="GO" id="GO:0042391">
    <property type="term" value="P:regulation of membrane potential"/>
    <property type="evidence" value="ECO:0000318"/>
    <property type="project" value="GO_Central"/>
</dbReference>
<dbReference type="GO" id="GO:0006937">
    <property type="term" value="P:regulation of muscle contraction"/>
    <property type="evidence" value="ECO:0000316"/>
    <property type="project" value="UniProtKB"/>
</dbReference>
<dbReference type="CDD" id="cd19031">
    <property type="entry name" value="LGIC_ECD_nAChR_proto_alpha-like"/>
    <property type="match status" value="1"/>
</dbReference>
<dbReference type="CDD" id="cd19064">
    <property type="entry name" value="LGIC_TM_nAChR"/>
    <property type="match status" value="1"/>
</dbReference>
<dbReference type="FunFam" id="2.70.170.10:FF:000044">
    <property type="entry name" value="AcetylCholine Receptor"/>
    <property type="match status" value="1"/>
</dbReference>
<dbReference type="FunFam" id="1.20.58.390:FF:000030">
    <property type="entry name" value="Acetylcholine receptor subunit alpha-L1"/>
    <property type="match status" value="1"/>
</dbReference>
<dbReference type="FunFam" id="1.20.58.390:FF:000001">
    <property type="entry name" value="Neuronal nicotinic acetylcholine receptor subunit 3"/>
    <property type="match status" value="1"/>
</dbReference>
<dbReference type="Gene3D" id="2.70.170.10">
    <property type="entry name" value="Neurotransmitter-gated ion-channel ligand-binding domain"/>
    <property type="match status" value="1"/>
</dbReference>
<dbReference type="Gene3D" id="1.20.58.390">
    <property type="entry name" value="Neurotransmitter-gated ion-channel transmembrane domain"/>
    <property type="match status" value="2"/>
</dbReference>
<dbReference type="InterPro" id="IPR006202">
    <property type="entry name" value="Neur_chan_lig-bd"/>
</dbReference>
<dbReference type="InterPro" id="IPR036734">
    <property type="entry name" value="Neur_chan_lig-bd_sf"/>
</dbReference>
<dbReference type="InterPro" id="IPR006201">
    <property type="entry name" value="Neur_channel"/>
</dbReference>
<dbReference type="InterPro" id="IPR036719">
    <property type="entry name" value="Neuro-gated_channel_TM_sf"/>
</dbReference>
<dbReference type="InterPro" id="IPR038050">
    <property type="entry name" value="Neuro_actylchol_rec"/>
</dbReference>
<dbReference type="InterPro" id="IPR006029">
    <property type="entry name" value="Neurotrans-gated_channel_TM"/>
</dbReference>
<dbReference type="InterPro" id="IPR018000">
    <property type="entry name" value="Neurotransmitter_ion_chnl_CS"/>
</dbReference>
<dbReference type="InterPro" id="IPR002394">
    <property type="entry name" value="Nicotinic_acetylcholine_rcpt"/>
</dbReference>
<dbReference type="NCBIfam" id="TIGR00860">
    <property type="entry name" value="LIC"/>
    <property type="match status" value="1"/>
</dbReference>
<dbReference type="PANTHER" id="PTHR18945">
    <property type="entry name" value="NEUROTRANSMITTER GATED ION CHANNEL"/>
    <property type="match status" value="1"/>
</dbReference>
<dbReference type="Pfam" id="PF02931">
    <property type="entry name" value="Neur_chan_LBD"/>
    <property type="match status" value="1"/>
</dbReference>
<dbReference type="Pfam" id="PF02932">
    <property type="entry name" value="Neur_chan_memb"/>
    <property type="match status" value="1"/>
</dbReference>
<dbReference type="PRINTS" id="PR00254">
    <property type="entry name" value="NICOTINICR"/>
</dbReference>
<dbReference type="PRINTS" id="PR00252">
    <property type="entry name" value="NRIONCHANNEL"/>
</dbReference>
<dbReference type="SUPFAM" id="SSF90112">
    <property type="entry name" value="Neurotransmitter-gated ion-channel transmembrane pore"/>
    <property type="match status" value="1"/>
</dbReference>
<dbReference type="SUPFAM" id="SSF63712">
    <property type="entry name" value="Nicotinic receptor ligand binding domain-like"/>
    <property type="match status" value="1"/>
</dbReference>
<dbReference type="PROSITE" id="PS00236">
    <property type="entry name" value="NEUROTR_ION_CHANNEL"/>
    <property type="match status" value="1"/>
</dbReference>